<evidence type="ECO:0000255" key="1">
    <source>
        <dbReference type="HAMAP-Rule" id="MF_00268"/>
    </source>
</evidence>
<evidence type="ECO:0000256" key="2">
    <source>
        <dbReference type="SAM" id="MobiDB-lite"/>
    </source>
</evidence>
<evidence type="ECO:0000305" key="3"/>
<dbReference type="EMBL" id="AE009951">
    <property type="protein sequence ID" value="AAL94743.1"/>
    <property type="status" value="ALT_INIT"/>
    <property type="molecule type" value="Genomic_DNA"/>
</dbReference>
<dbReference type="RefSeq" id="NP_603444.1">
    <property type="nucleotide sequence ID" value="NC_003454.1"/>
</dbReference>
<dbReference type="RefSeq" id="WP_147373114.1">
    <property type="nucleotide sequence ID" value="NZ_CP028101.1"/>
</dbReference>
<dbReference type="SMR" id="Q8RFY0"/>
<dbReference type="FunCoup" id="Q8RFY0">
    <property type="interactions" value="378"/>
</dbReference>
<dbReference type="STRING" id="190304.FN0547"/>
<dbReference type="PaxDb" id="190304-FN0547"/>
<dbReference type="EnsemblBacteria" id="AAL94743">
    <property type="protein sequence ID" value="AAL94743"/>
    <property type="gene ID" value="FN0547"/>
</dbReference>
<dbReference type="GeneID" id="79783549"/>
<dbReference type="KEGG" id="fnu:FN0547"/>
<dbReference type="PATRIC" id="fig|190304.8.peg.1114"/>
<dbReference type="eggNOG" id="COG0468">
    <property type="taxonomic scope" value="Bacteria"/>
</dbReference>
<dbReference type="HOGENOM" id="CLU_040469_3_2_0"/>
<dbReference type="InParanoid" id="Q8RFY0"/>
<dbReference type="Proteomes" id="UP000002521">
    <property type="component" value="Chromosome"/>
</dbReference>
<dbReference type="GO" id="GO:0005737">
    <property type="term" value="C:cytoplasm"/>
    <property type="evidence" value="ECO:0007669"/>
    <property type="project" value="UniProtKB-SubCell"/>
</dbReference>
<dbReference type="GO" id="GO:0005524">
    <property type="term" value="F:ATP binding"/>
    <property type="evidence" value="ECO:0007669"/>
    <property type="project" value="UniProtKB-UniRule"/>
</dbReference>
<dbReference type="GO" id="GO:0016887">
    <property type="term" value="F:ATP hydrolysis activity"/>
    <property type="evidence" value="ECO:0007669"/>
    <property type="project" value="InterPro"/>
</dbReference>
<dbReference type="GO" id="GO:0140664">
    <property type="term" value="F:ATP-dependent DNA damage sensor activity"/>
    <property type="evidence" value="ECO:0007669"/>
    <property type="project" value="InterPro"/>
</dbReference>
<dbReference type="GO" id="GO:0003684">
    <property type="term" value="F:damaged DNA binding"/>
    <property type="evidence" value="ECO:0007669"/>
    <property type="project" value="UniProtKB-UniRule"/>
</dbReference>
<dbReference type="GO" id="GO:0003697">
    <property type="term" value="F:single-stranded DNA binding"/>
    <property type="evidence" value="ECO:0007669"/>
    <property type="project" value="UniProtKB-UniRule"/>
</dbReference>
<dbReference type="GO" id="GO:0006310">
    <property type="term" value="P:DNA recombination"/>
    <property type="evidence" value="ECO:0007669"/>
    <property type="project" value="UniProtKB-UniRule"/>
</dbReference>
<dbReference type="GO" id="GO:0006281">
    <property type="term" value="P:DNA repair"/>
    <property type="evidence" value="ECO:0007669"/>
    <property type="project" value="UniProtKB-UniRule"/>
</dbReference>
<dbReference type="GO" id="GO:0009432">
    <property type="term" value="P:SOS response"/>
    <property type="evidence" value="ECO:0007669"/>
    <property type="project" value="UniProtKB-UniRule"/>
</dbReference>
<dbReference type="CDD" id="cd00983">
    <property type="entry name" value="RecA"/>
    <property type="match status" value="1"/>
</dbReference>
<dbReference type="FunFam" id="3.40.50.300:FF:000087">
    <property type="entry name" value="Recombinase RecA"/>
    <property type="match status" value="1"/>
</dbReference>
<dbReference type="Gene3D" id="3.40.50.300">
    <property type="entry name" value="P-loop containing nucleotide triphosphate hydrolases"/>
    <property type="match status" value="1"/>
</dbReference>
<dbReference type="HAMAP" id="MF_00268">
    <property type="entry name" value="RecA"/>
    <property type="match status" value="1"/>
</dbReference>
<dbReference type="InterPro" id="IPR003593">
    <property type="entry name" value="AAA+_ATPase"/>
</dbReference>
<dbReference type="InterPro" id="IPR013765">
    <property type="entry name" value="DNA_recomb/repair_RecA"/>
</dbReference>
<dbReference type="InterPro" id="IPR020584">
    <property type="entry name" value="DNA_recomb/repair_RecA_CS"/>
</dbReference>
<dbReference type="InterPro" id="IPR027417">
    <property type="entry name" value="P-loop_NTPase"/>
</dbReference>
<dbReference type="InterPro" id="IPR049261">
    <property type="entry name" value="RecA-like_C"/>
</dbReference>
<dbReference type="InterPro" id="IPR049428">
    <property type="entry name" value="RecA-like_N"/>
</dbReference>
<dbReference type="InterPro" id="IPR020588">
    <property type="entry name" value="RecA_ATP-bd"/>
</dbReference>
<dbReference type="InterPro" id="IPR023400">
    <property type="entry name" value="RecA_C_sf"/>
</dbReference>
<dbReference type="InterPro" id="IPR020587">
    <property type="entry name" value="RecA_monomer-monomer_interface"/>
</dbReference>
<dbReference type="NCBIfam" id="TIGR02012">
    <property type="entry name" value="tigrfam_recA"/>
    <property type="match status" value="1"/>
</dbReference>
<dbReference type="PANTHER" id="PTHR45900:SF1">
    <property type="entry name" value="MITOCHONDRIAL DNA REPAIR PROTEIN RECA HOMOLOG-RELATED"/>
    <property type="match status" value="1"/>
</dbReference>
<dbReference type="PANTHER" id="PTHR45900">
    <property type="entry name" value="RECA"/>
    <property type="match status" value="1"/>
</dbReference>
<dbReference type="Pfam" id="PF00154">
    <property type="entry name" value="RecA"/>
    <property type="match status" value="1"/>
</dbReference>
<dbReference type="Pfam" id="PF21096">
    <property type="entry name" value="RecA_C"/>
    <property type="match status" value="1"/>
</dbReference>
<dbReference type="PRINTS" id="PR00142">
    <property type="entry name" value="RECA"/>
</dbReference>
<dbReference type="SMART" id="SM00382">
    <property type="entry name" value="AAA"/>
    <property type="match status" value="1"/>
</dbReference>
<dbReference type="SUPFAM" id="SSF52540">
    <property type="entry name" value="P-loop containing nucleoside triphosphate hydrolases"/>
    <property type="match status" value="1"/>
</dbReference>
<dbReference type="SUPFAM" id="SSF54752">
    <property type="entry name" value="RecA protein, C-terminal domain"/>
    <property type="match status" value="1"/>
</dbReference>
<dbReference type="PROSITE" id="PS00321">
    <property type="entry name" value="RECA_1"/>
    <property type="match status" value="1"/>
</dbReference>
<dbReference type="PROSITE" id="PS50162">
    <property type="entry name" value="RECA_2"/>
    <property type="match status" value="1"/>
</dbReference>
<dbReference type="PROSITE" id="PS50163">
    <property type="entry name" value="RECA_3"/>
    <property type="match status" value="1"/>
</dbReference>
<organism>
    <name type="scientific">Fusobacterium nucleatum subsp. nucleatum (strain ATCC 25586 / DSM 15643 / BCRC 10681 / CIP 101130 / JCM 8532 / KCTC 2640 / LMG 13131 / VPI 4355)</name>
    <dbReference type="NCBI Taxonomy" id="190304"/>
    <lineage>
        <taxon>Bacteria</taxon>
        <taxon>Fusobacteriati</taxon>
        <taxon>Fusobacteriota</taxon>
        <taxon>Fusobacteriia</taxon>
        <taxon>Fusobacteriales</taxon>
        <taxon>Fusobacteriaceae</taxon>
        <taxon>Fusobacterium</taxon>
    </lineage>
</organism>
<proteinExistence type="inferred from homology"/>
<accession>Q8RFY0</accession>
<comment type="function">
    <text evidence="1">Can catalyze the hydrolysis of ATP in the presence of single-stranded DNA, the ATP-dependent uptake of single-stranded DNA by duplex DNA, and the ATP-dependent hybridization of homologous single-stranded DNAs. It interacts with LexA causing its activation and leading to its autocatalytic cleavage.</text>
</comment>
<comment type="subcellular location">
    <subcellularLocation>
        <location evidence="1">Cytoplasm</location>
    </subcellularLocation>
</comment>
<comment type="similarity">
    <text evidence="1">Belongs to the RecA family.</text>
</comment>
<comment type="sequence caution" evidence="3">
    <conflict type="erroneous initiation">
        <sequence resource="EMBL-CDS" id="AAL94743"/>
    </conflict>
</comment>
<gene>
    <name evidence="1" type="primary">recA</name>
    <name type="ordered locus">FN0547</name>
</gene>
<keyword id="KW-0067">ATP-binding</keyword>
<keyword id="KW-0963">Cytoplasm</keyword>
<keyword id="KW-0227">DNA damage</keyword>
<keyword id="KW-0233">DNA recombination</keyword>
<keyword id="KW-0234">DNA repair</keyword>
<keyword id="KW-0238">DNA-binding</keyword>
<keyword id="KW-0547">Nucleotide-binding</keyword>
<keyword id="KW-1185">Reference proteome</keyword>
<keyword id="KW-0742">SOS response</keyword>
<protein>
    <recommendedName>
        <fullName evidence="1">Protein RecA</fullName>
    </recommendedName>
    <alternativeName>
        <fullName evidence="1">Recombinase A</fullName>
    </alternativeName>
</protein>
<name>RECA_FUSNN</name>
<feature type="chain" id="PRO_0000122717" description="Protein RecA">
    <location>
        <begin position="1"/>
        <end position="378"/>
    </location>
</feature>
<feature type="region of interest" description="Disordered" evidence="2">
    <location>
        <begin position="1"/>
        <end position="20"/>
    </location>
</feature>
<feature type="region of interest" description="Disordered" evidence="2">
    <location>
        <begin position="344"/>
        <end position="378"/>
    </location>
</feature>
<feature type="compositionally biased region" description="Acidic residues" evidence="2">
    <location>
        <begin position="359"/>
        <end position="378"/>
    </location>
</feature>
<feature type="binding site" evidence="1">
    <location>
        <begin position="80"/>
        <end position="87"/>
    </location>
    <ligand>
        <name>ATP</name>
        <dbReference type="ChEBI" id="CHEBI:30616"/>
    </ligand>
</feature>
<reference key="1">
    <citation type="journal article" date="2002" name="J. Bacteriol.">
        <title>Genome sequence and analysis of the oral bacterium Fusobacterium nucleatum strain ATCC 25586.</title>
        <authorList>
            <person name="Kapatral V."/>
            <person name="Anderson I."/>
            <person name="Ivanova N."/>
            <person name="Reznik G."/>
            <person name="Los T."/>
            <person name="Lykidis A."/>
            <person name="Bhattacharyya A."/>
            <person name="Bartman A."/>
            <person name="Gardner W."/>
            <person name="Grechkin G."/>
            <person name="Zhu L."/>
            <person name="Vasieva O."/>
            <person name="Chu L."/>
            <person name="Kogan Y."/>
            <person name="Chaga O."/>
            <person name="Goltsman E."/>
            <person name="Bernal A."/>
            <person name="Larsen N."/>
            <person name="D'Souza M."/>
            <person name="Walunas T."/>
            <person name="Pusch G."/>
            <person name="Haselkorn R."/>
            <person name="Fonstein M."/>
            <person name="Kyrpides N.C."/>
            <person name="Overbeek R."/>
        </authorList>
    </citation>
    <scope>NUCLEOTIDE SEQUENCE [LARGE SCALE GENOMIC DNA]</scope>
    <source>
        <strain>ATCC 25586 / DSM 15643 / BCRC 10681 / CIP 101130 / JCM 8532 / KCTC 2640 / LMG 13131 / VPI 4355</strain>
    </source>
</reference>
<sequence>MAAKKDKSVPDSKITDKEGKEKAVKDAMAAITKGFGSGLIMKLGEKSSMNVESIPTGSINLDIALGIGGVPKGRIIEIYGAESSGKTTLALHVIAEAQKQGGTVAFIDAEHALDPVYAKALGVDIDELLISQPDYGEQALEIADTLVRSGAIDLIVIDSVAALVPKAEIDGEMSDQQMGLQARLMSKGLRKLTGNLNKYKTTMIFINQIREKIGVTYGPTTTTTGGKALKFYSSVRMEVKKMGTVKQGDDPIGSEVIVKVTKNKVAPPFKEAAFEILYGKGISKVGEIIDAAVAKDVIVKAGSWFSFRDQSIGQGKEKVRAELEINPELLAQVEKDLKEAIAKGPVDKKKKKSKKEASSDDTDDENLEIDDAIDENND</sequence>